<proteinExistence type="inferred from homology"/>
<feature type="chain" id="PRO_1000072205" description="Acyl-[acyl-carrier-protein]--UDP-N-acetylglucosamine O-acyltransferase">
    <location>
        <begin position="1"/>
        <end position="262"/>
    </location>
</feature>
<gene>
    <name evidence="1" type="primary">lpxA</name>
    <name type="ordered locus">Ccon26_17220</name>
    <name type="ORF">CCC13826_2123</name>
</gene>
<dbReference type="EC" id="2.3.1.129" evidence="1"/>
<dbReference type="EMBL" id="CP000792">
    <property type="protein sequence ID" value="ABW74828.1"/>
    <property type="molecule type" value="Genomic_DNA"/>
</dbReference>
<dbReference type="RefSeq" id="WP_009295380.1">
    <property type="nucleotide sequence ID" value="NC_009802.2"/>
</dbReference>
<dbReference type="SMR" id="A8Z6P9"/>
<dbReference type="STRING" id="360104.CCC13826_2123"/>
<dbReference type="KEGG" id="cco:CCC13826_2123"/>
<dbReference type="eggNOG" id="COG1043">
    <property type="taxonomic scope" value="Bacteria"/>
</dbReference>
<dbReference type="HOGENOM" id="CLU_061249_0_0_7"/>
<dbReference type="OrthoDB" id="9807278at2"/>
<dbReference type="UniPathway" id="UPA00359">
    <property type="reaction ID" value="UER00477"/>
</dbReference>
<dbReference type="Proteomes" id="UP000001121">
    <property type="component" value="Chromosome"/>
</dbReference>
<dbReference type="GO" id="GO:0005737">
    <property type="term" value="C:cytoplasm"/>
    <property type="evidence" value="ECO:0007669"/>
    <property type="project" value="UniProtKB-SubCell"/>
</dbReference>
<dbReference type="GO" id="GO:0016020">
    <property type="term" value="C:membrane"/>
    <property type="evidence" value="ECO:0007669"/>
    <property type="project" value="GOC"/>
</dbReference>
<dbReference type="GO" id="GO:0008780">
    <property type="term" value="F:acyl-[acyl-carrier-protein]-UDP-N-acetylglucosamine O-acyltransferase activity"/>
    <property type="evidence" value="ECO:0007669"/>
    <property type="project" value="UniProtKB-UniRule"/>
</dbReference>
<dbReference type="GO" id="GO:0009245">
    <property type="term" value="P:lipid A biosynthetic process"/>
    <property type="evidence" value="ECO:0007669"/>
    <property type="project" value="UniProtKB-UniRule"/>
</dbReference>
<dbReference type="CDD" id="cd03351">
    <property type="entry name" value="LbH_UDP-GlcNAc_AT"/>
    <property type="match status" value="1"/>
</dbReference>
<dbReference type="Gene3D" id="2.160.10.10">
    <property type="entry name" value="Hexapeptide repeat proteins"/>
    <property type="match status" value="1"/>
</dbReference>
<dbReference type="Gene3D" id="1.20.1180.10">
    <property type="entry name" value="Udp N-acetylglucosamine O-acyltransferase, C-terminal domain"/>
    <property type="match status" value="1"/>
</dbReference>
<dbReference type="HAMAP" id="MF_00387">
    <property type="entry name" value="LpxA"/>
    <property type="match status" value="1"/>
</dbReference>
<dbReference type="InterPro" id="IPR029098">
    <property type="entry name" value="Acetyltransf_C"/>
</dbReference>
<dbReference type="InterPro" id="IPR037157">
    <property type="entry name" value="Acetyltransf_C_sf"/>
</dbReference>
<dbReference type="InterPro" id="IPR001451">
    <property type="entry name" value="Hexapep"/>
</dbReference>
<dbReference type="InterPro" id="IPR018357">
    <property type="entry name" value="Hexapep_transf_CS"/>
</dbReference>
<dbReference type="InterPro" id="IPR010137">
    <property type="entry name" value="Lipid_A_LpxA"/>
</dbReference>
<dbReference type="InterPro" id="IPR011004">
    <property type="entry name" value="Trimer_LpxA-like_sf"/>
</dbReference>
<dbReference type="NCBIfam" id="TIGR01852">
    <property type="entry name" value="lipid_A_lpxA"/>
    <property type="match status" value="1"/>
</dbReference>
<dbReference type="NCBIfam" id="NF003657">
    <property type="entry name" value="PRK05289.1"/>
    <property type="match status" value="1"/>
</dbReference>
<dbReference type="PANTHER" id="PTHR43480">
    <property type="entry name" value="ACYL-[ACYL-CARRIER-PROTEIN]--UDP-N-ACETYLGLUCOSAMINE O-ACYLTRANSFERASE"/>
    <property type="match status" value="1"/>
</dbReference>
<dbReference type="PANTHER" id="PTHR43480:SF1">
    <property type="entry name" value="ACYL-[ACYL-CARRIER-PROTEIN]--UDP-N-ACETYLGLUCOSAMINE O-ACYLTRANSFERASE, MITOCHONDRIAL-RELATED"/>
    <property type="match status" value="1"/>
</dbReference>
<dbReference type="Pfam" id="PF13720">
    <property type="entry name" value="Acetyltransf_11"/>
    <property type="match status" value="1"/>
</dbReference>
<dbReference type="Pfam" id="PF00132">
    <property type="entry name" value="Hexapep"/>
    <property type="match status" value="1"/>
</dbReference>
<dbReference type="PIRSF" id="PIRSF000456">
    <property type="entry name" value="UDP-GlcNAc_acltr"/>
    <property type="match status" value="1"/>
</dbReference>
<dbReference type="SUPFAM" id="SSF51161">
    <property type="entry name" value="Trimeric LpxA-like enzymes"/>
    <property type="match status" value="1"/>
</dbReference>
<dbReference type="PROSITE" id="PS00101">
    <property type="entry name" value="HEXAPEP_TRANSFERASES"/>
    <property type="match status" value="1"/>
</dbReference>
<name>LPXA_CAMC1</name>
<reference key="1">
    <citation type="submission" date="2007-10" db="EMBL/GenBank/DDBJ databases">
        <title>Genome sequence of Campylobacter concisus 13826 isolated from human feces.</title>
        <authorList>
            <person name="Fouts D.E."/>
            <person name="Mongodin E.F."/>
            <person name="Puiu D."/>
            <person name="Sebastian Y."/>
            <person name="Miller W.G."/>
            <person name="Mandrell R.E."/>
            <person name="On S."/>
            <person name="Nelson K.E."/>
        </authorList>
    </citation>
    <scope>NUCLEOTIDE SEQUENCE [LARGE SCALE GENOMIC DNA]</scope>
    <source>
        <strain>13826</strain>
    </source>
</reference>
<evidence type="ECO:0000255" key="1">
    <source>
        <dbReference type="HAMAP-Rule" id="MF_00387"/>
    </source>
</evidence>
<keyword id="KW-0012">Acyltransferase</keyword>
<keyword id="KW-0963">Cytoplasm</keyword>
<keyword id="KW-0441">Lipid A biosynthesis</keyword>
<keyword id="KW-0444">Lipid biosynthesis</keyword>
<keyword id="KW-0443">Lipid metabolism</keyword>
<keyword id="KW-0677">Repeat</keyword>
<keyword id="KW-0808">Transferase</keyword>
<organism>
    <name type="scientific">Campylobacter concisus (strain 13826)</name>
    <dbReference type="NCBI Taxonomy" id="360104"/>
    <lineage>
        <taxon>Bacteria</taxon>
        <taxon>Pseudomonadati</taxon>
        <taxon>Campylobacterota</taxon>
        <taxon>Epsilonproteobacteria</taxon>
        <taxon>Campylobacterales</taxon>
        <taxon>Campylobacteraceae</taxon>
        <taxon>Campylobacter</taxon>
    </lineage>
</organism>
<comment type="function">
    <text evidence="1">Involved in the biosynthesis of lipid A, a phosphorylated glycolipid that anchors the lipopolysaccharide to the outer membrane of the cell.</text>
</comment>
<comment type="catalytic activity">
    <reaction evidence="1">
        <text>a (3R)-hydroxyacyl-[ACP] + UDP-N-acetyl-alpha-D-glucosamine = a UDP-3-O-[(3R)-3-hydroxyacyl]-N-acetyl-alpha-D-glucosamine + holo-[ACP]</text>
        <dbReference type="Rhea" id="RHEA:67812"/>
        <dbReference type="Rhea" id="RHEA-COMP:9685"/>
        <dbReference type="Rhea" id="RHEA-COMP:9945"/>
        <dbReference type="ChEBI" id="CHEBI:57705"/>
        <dbReference type="ChEBI" id="CHEBI:64479"/>
        <dbReference type="ChEBI" id="CHEBI:78827"/>
        <dbReference type="ChEBI" id="CHEBI:173225"/>
        <dbReference type="EC" id="2.3.1.129"/>
    </reaction>
</comment>
<comment type="pathway">
    <text evidence="1">Glycolipid biosynthesis; lipid IV(A) biosynthesis; lipid IV(A) from (3R)-3-hydroxytetradecanoyl-[acyl-carrier-protein] and UDP-N-acetyl-alpha-D-glucosamine: step 1/6.</text>
</comment>
<comment type="subunit">
    <text evidence="1">Homotrimer.</text>
</comment>
<comment type="subcellular location">
    <subcellularLocation>
        <location evidence="1">Cytoplasm</location>
    </subcellularLocation>
</comment>
<comment type="similarity">
    <text evidence="1">Belongs to the transferase hexapeptide repeat family. LpxA subfamily.</text>
</comment>
<accession>A8Z6P9</accession>
<protein>
    <recommendedName>
        <fullName evidence="1">Acyl-[acyl-carrier-protein]--UDP-N-acetylglucosamine O-acyltransferase</fullName>
        <shortName evidence="1">UDP-N-acetylglucosamine acyltransferase</shortName>
        <ecNumber evidence="1">2.3.1.129</ecNumber>
    </recommendedName>
</protein>
<sequence length="262" mass="28427">MKNIHQTAVIEDGAIIGDDANIEAYAFVSKDAVLGNNVTIKQGARVLGKTRIGDNSRVFSYAIVGDIPQDISYKDEVDTGVIIGEHATIREFCTINSGTHKGDGITRIGDNAFIMAYSHIAHDCIIGSNVILANNATLAGHVELGDYAVVGGLTPIHQFVRVGESCMVAGASALSQDVVPFCLAEGNRAYIRSLNLVGIRRRFDKEQVEELVRAYKFLFNQGISLKDQANELIAKTSDENVKKMCKFILETTRGIPLAKGRD</sequence>